<accession>A5U4D6</accession>
<sequence>MTWPLPDRLSINSLSGTPAVDLSSFTDFLRRQAPELLPASISGGAPLAGGDAQLPHGTTIVALKYPGGVVMAGDRRSTQGNMISGRDVRKVYITDDYTATGIAGTAAVAVEFARLYAVELEHYEKLEGVPLTFAGKINRLAIMVRGNLAAAMQGLLALPLLAGYDIHASDPQSAGRIVSFDAAGGWNIEEEGYQAVGSGSLFAKSSMKKLYSQVTDGDSGLRVAVEALYDAADDDSATGGPDLVRGIFPTAVIIDADGAVDVPESRIAELARAIIESRSGADTFGSDGGEK</sequence>
<protein>
    <recommendedName>
        <fullName evidence="1">Proteasome subunit beta</fullName>
        <ecNumber evidence="1">3.4.25.1</ecNumber>
    </recommendedName>
    <alternativeName>
        <fullName evidence="1">20S proteasome beta subunit</fullName>
    </alternativeName>
    <alternativeName>
        <fullName evidence="1">Proteasome core protein PrcB</fullName>
    </alternativeName>
</protein>
<evidence type="ECO:0000255" key="1">
    <source>
        <dbReference type="HAMAP-Rule" id="MF_02113"/>
    </source>
</evidence>
<dbReference type="EC" id="3.4.25.1" evidence="1"/>
<dbReference type="EMBL" id="CP000611">
    <property type="protein sequence ID" value="ABQ73886.1"/>
    <property type="molecule type" value="Genomic_DNA"/>
</dbReference>
<dbReference type="EMBL" id="EF619619">
    <property type="protein sequence ID" value="ABR14062.1"/>
    <property type="molecule type" value="Genomic_DNA"/>
</dbReference>
<dbReference type="RefSeq" id="WP_003411023.1">
    <property type="nucleotide sequence ID" value="NZ_CP016972.1"/>
</dbReference>
<dbReference type="EMDB" id="EMD-7097"/>
<dbReference type="EMDB" id="EMD-7098"/>
<dbReference type="SMR" id="A5U4D6"/>
<dbReference type="MEROPS" id="T01.005"/>
<dbReference type="KEGG" id="mra:MRA_2125"/>
<dbReference type="eggNOG" id="COG0638">
    <property type="taxonomic scope" value="Bacteria"/>
</dbReference>
<dbReference type="HOGENOM" id="CLU_035750_2_0_11"/>
<dbReference type="UniPathway" id="UPA00997"/>
<dbReference type="Proteomes" id="UP000001988">
    <property type="component" value="Chromosome"/>
</dbReference>
<dbReference type="GO" id="GO:0005737">
    <property type="term" value="C:cytoplasm"/>
    <property type="evidence" value="ECO:0007669"/>
    <property type="project" value="UniProtKB-SubCell"/>
</dbReference>
<dbReference type="GO" id="GO:0019774">
    <property type="term" value="C:proteasome core complex, beta-subunit complex"/>
    <property type="evidence" value="ECO:0007669"/>
    <property type="project" value="UniProtKB-UniRule"/>
</dbReference>
<dbReference type="GO" id="GO:0004298">
    <property type="term" value="F:threonine-type endopeptidase activity"/>
    <property type="evidence" value="ECO:0007669"/>
    <property type="project" value="UniProtKB-UniRule"/>
</dbReference>
<dbReference type="GO" id="GO:0019941">
    <property type="term" value="P:modification-dependent protein catabolic process"/>
    <property type="evidence" value="ECO:0007669"/>
    <property type="project" value="UniProtKB-UniRule"/>
</dbReference>
<dbReference type="GO" id="GO:0010498">
    <property type="term" value="P:proteasomal protein catabolic process"/>
    <property type="evidence" value="ECO:0007669"/>
    <property type="project" value="UniProtKB-UniRule"/>
</dbReference>
<dbReference type="CDD" id="cd01906">
    <property type="entry name" value="proteasome_protease_HslV"/>
    <property type="match status" value="1"/>
</dbReference>
<dbReference type="FunFam" id="3.60.20.10:FF:000046">
    <property type="entry name" value="Proteasome subunit beta"/>
    <property type="match status" value="1"/>
</dbReference>
<dbReference type="Gene3D" id="3.60.20.10">
    <property type="entry name" value="Glutamine Phosphoribosylpyrophosphate, subunit 1, domain 1"/>
    <property type="match status" value="1"/>
</dbReference>
<dbReference type="HAMAP" id="MF_02113_B">
    <property type="entry name" value="Proteasome_B_B"/>
    <property type="match status" value="1"/>
</dbReference>
<dbReference type="InterPro" id="IPR029055">
    <property type="entry name" value="Ntn_hydrolases_N"/>
</dbReference>
<dbReference type="InterPro" id="IPR001353">
    <property type="entry name" value="Proteasome_sua/b"/>
</dbReference>
<dbReference type="InterPro" id="IPR023333">
    <property type="entry name" value="Proteasome_suB-type"/>
</dbReference>
<dbReference type="InterPro" id="IPR022483">
    <property type="entry name" value="PSB_actinobac"/>
</dbReference>
<dbReference type="NCBIfam" id="TIGR03690">
    <property type="entry name" value="20S_bact_beta"/>
    <property type="match status" value="1"/>
</dbReference>
<dbReference type="PANTHER" id="PTHR32194:SF0">
    <property type="entry name" value="ATP-DEPENDENT PROTEASE SUBUNIT HSLV"/>
    <property type="match status" value="1"/>
</dbReference>
<dbReference type="PANTHER" id="PTHR32194">
    <property type="entry name" value="METALLOPROTEASE TLDD"/>
    <property type="match status" value="1"/>
</dbReference>
<dbReference type="Pfam" id="PF00227">
    <property type="entry name" value="Proteasome"/>
    <property type="match status" value="1"/>
</dbReference>
<dbReference type="SUPFAM" id="SSF56235">
    <property type="entry name" value="N-terminal nucleophile aminohydrolases (Ntn hydrolases)"/>
    <property type="match status" value="1"/>
</dbReference>
<dbReference type="PROSITE" id="PS51476">
    <property type="entry name" value="PROTEASOME_BETA_2"/>
    <property type="match status" value="1"/>
</dbReference>
<reference key="1">
    <citation type="journal article" date="2008" name="PLoS ONE">
        <title>Genetic basis of virulence attenuation revealed by comparative genomic analysis of Mycobacterium tuberculosis strain H37Ra versus H37Rv.</title>
        <authorList>
            <person name="Zheng H."/>
            <person name="Lu L."/>
            <person name="Wang B."/>
            <person name="Pu S."/>
            <person name="Zhang X."/>
            <person name="Zhu G."/>
            <person name="Shi W."/>
            <person name="Zhang L."/>
            <person name="Wang H."/>
            <person name="Wang S."/>
            <person name="Zhao G."/>
            <person name="Zhang Y."/>
        </authorList>
    </citation>
    <scope>NUCLEOTIDE SEQUENCE [LARGE SCALE GENOMIC DNA]</scope>
    <source>
        <strain>ATCC 25177 / H37Ra</strain>
    </source>
</reference>
<gene>
    <name evidence="1" type="primary">prcB</name>
    <name type="ordered locus">MRA_2125</name>
</gene>
<proteinExistence type="inferred from homology"/>
<feature type="propeptide" id="PRO_0000397546" description="Removed in mature form; by autocatalysis" evidence="1">
    <location>
        <begin position="1"/>
        <end position="57"/>
    </location>
</feature>
<feature type="chain" id="PRO_0000397547" description="Proteasome subunit beta">
    <location>
        <begin position="58"/>
        <end position="291"/>
    </location>
</feature>
<feature type="active site" description="Nucleophile" evidence="1">
    <location>
        <position position="58"/>
    </location>
</feature>
<comment type="function">
    <text evidence="1">Component of the proteasome core, a large protease complex with broad specificity involved in protein degradation.</text>
</comment>
<comment type="catalytic activity">
    <reaction evidence="1">
        <text>Cleavage of peptide bonds with very broad specificity.</text>
        <dbReference type="EC" id="3.4.25.1"/>
    </reaction>
</comment>
<comment type="activity regulation">
    <text evidence="1">The formation of the proteasomal ATPase ARC-20S proteasome complex, likely via the docking of the C-termini of ARC into the intersubunit pockets in the alpha-rings, may trigger opening of the gate for substrate entry. Interconversion between the open-gate and close-gate conformations leads to a dynamic regulation of the 20S proteasome proteolysis activity.</text>
</comment>
<comment type="pathway">
    <text evidence="1">Protein degradation; proteasomal Pup-dependent pathway.</text>
</comment>
<comment type="subunit">
    <text evidence="1">The 20S proteasome core is composed of 14 alpha and 14 beta subunits that assemble into four stacked heptameric rings, resulting in a barrel-shaped structure. The two inner rings, each composed of seven catalytic beta subunits, are sandwiched by two outer rings, each composed of seven alpha subunits. The catalytic chamber with the active sites is on the inside of the barrel. Has a gated structure, the ends of the cylinder being occluded by the N-termini of the alpha-subunits. Is capped by the proteasome-associated ATPase, ARC.</text>
</comment>
<comment type="subcellular location">
    <subcellularLocation>
        <location evidence="1">Cytoplasm</location>
    </subcellularLocation>
</comment>
<comment type="similarity">
    <text evidence="1">Belongs to the peptidase T1B family.</text>
</comment>
<name>PSB_MYCTA</name>
<keyword id="KW-0068">Autocatalytic cleavage</keyword>
<keyword id="KW-0963">Cytoplasm</keyword>
<keyword id="KW-0378">Hydrolase</keyword>
<keyword id="KW-0645">Protease</keyword>
<keyword id="KW-0647">Proteasome</keyword>
<keyword id="KW-1185">Reference proteome</keyword>
<keyword id="KW-0888">Threonine protease</keyword>
<keyword id="KW-0865">Zymogen</keyword>
<organism>
    <name type="scientific">Mycobacterium tuberculosis (strain ATCC 25177 / H37Ra)</name>
    <dbReference type="NCBI Taxonomy" id="419947"/>
    <lineage>
        <taxon>Bacteria</taxon>
        <taxon>Bacillati</taxon>
        <taxon>Actinomycetota</taxon>
        <taxon>Actinomycetes</taxon>
        <taxon>Mycobacteriales</taxon>
        <taxon>Mycobacteriaceae</taxon>
        <taxon>Mycobacterium</taxon>
        <taxon>Mycobacterium tuberculosis complex</taxon>
    </lineage>
</organism>